<organism>
    <name type="scientific">Laribacter hongkongensis (strain HLHK9)</name>
    <dbReference type="NCBI Taxonomy" id="557598"/>
    <lineage>
        <taxon>Bacteria</taxon>
        <taxon>Pseudomonadati</taxon>
        <taxon>Pseudomonadota</taxon>
        <taxon>Betaproteobacteria</taxon>
        <taxon>Neisseriales</taxon>
        <taxon>Aquaspirillaceae</taxon>
        <taxon>Laribacter</taxon>
    </lineage>
</organism>
<evidence type="ECO:0000255" key="1">
    <source>
        <dbReference type="HAMAP-Rule" id="MF_00125"/>
    </source>
</evidence>
<comment type="function">
    <text evidence="1">Required for the first step of histidine biosynthesis. May allow the feedback regulation of ATP phosphoribosyltransferase activity by histidine.</text>
</comment>
<comment type="pathway">
    <text evidence="1">Amino-acid biosynthesis; L-histidine biosynthesis; L-histidine from 5-phospho-alpha-D-ribose 1-diphosphate: step 1/9.</text>
</comment>
<comment type="subunit">
    <text evidence="1">Heteromultimer composed of HisG and HisZ subunits.</text>
</comment>
<comment type="subcellular location">
    <subcellularLocation>
        <location evidence="1">Cytoplasm</location>
    </subcellularLocation>
</comment>
<comment type="miscellaneous">
    <text>This function is generally fulfilled by the C-terminal part of HisG, which is missing in some bacteria such as this one.</text>
</comment>
<comment type="similarity">
    <text evidence="1">Belongs to the class-II aminoacyl-tRNA synthetase family. HisZ subfamily.</text>
</comment>
<accession>C1DD53</accession>
<feature type="chain" id="PRO_1000122672" description="ATP phosphoribosyltransferase regulatory subunit">
    <location>
        <begin position="1"/>
        <end position="385"/>
    </location>
</feature>
<keyword id="KW-0028">Amino-acid biosynthesis</keyword>
<keyword id="KW-0963">Cytoplasm</keyword>
<keyword id="KW-0368">Histidine biosynthesis</keyword>
<keyword id="KW-1185">Reference proteome</keyword>
<protein>
    <recommendedName>
        <fullName evidence="1">ATP phosphoribosyltransferase regulatory subunit</fullName>
    </recommendedName>
</protein>
<proteinExistence type="inferred from homology"/>
<gene>
    <name evidence="1" type="primary">hisZ</name>
    <name type="ordered locus">LHK_00695</name>
</gene>
<dbReference type="EMBL" id="CP001154">
    <property type="protein sequence ID" value="ACO73688.1"/>
    <property type="molecule type" value="Genomic_DNA"/>
</dbReference>
<dbReference type="RefSeq" id="WP_012696180.1">
    <property type="nucleotide sequence ID" value="NC_012559.1"/>
</dbReference>
<dbReference type="SMR" id="C1DD53"/>
<dbReference type="STRING" id="557598.LHK_00695"/>
<dbReference type="KEGG" id="lhk:LHK_00695"/>
<dbReference type="eggNOG" id="COG3705">
    <property type="taxonomic scope" value="Bacteria"/>
</dbReference>
<dbReference type="HOGENOM" id="CLU_025113_0_1_4"/>
<dbReference type="UniPathway" id="UPA00031">
    <property type="reaction ID" value="UER00006"/>
</dbReference>
<dbReference type="Proteomes" id="UP000002010">
    <property type="component" value="Chromosome"/>
</dbReference>
<dbReference type="GO" id="GO:0005737">
    <property type="term" value="C:cytoplasm"/>
    <property type="evidence" value="ECO:0007669"/>
    <property type="project" value="UniProtKB-SubCell"/>
</dbReference>
<dbReference type="GO" id="GO:0004821">
    <property type="term" value="F:histidine-tRNA ligase activity"/>
    <property type="evidence" value="ECO:0007669"/>
    <property type="project" value="TreeGrafter"/>
</dbReference>
<dbReference type="GO" id="GO:0006427">
    <property type="term" value="P:histidyl-tRNA aminoacylation"/>
    <property type="evidence" value="ECO:0007669"/>
    <property type="project" value="TreeGrafter"/>
</dbReference>
<dbReference type="GO" id="GO:0000105">
    <property type="term" value="P:L-histidine biosynthetic process"/>
    <property type="evidence" value="ECO:0007669"/>
    <property type="project" value="UniProtKB-UniRule"/>
</dbReference>
<dbReference type="CDD" id="cd00773">
    <property type="entry name" value="HisRS-like_core"/>
    <property type="match status" value="1"/>
</dbReference>
<dbReference type="Gene3D" id="3.30.930.10">
    <property type="entry name" value="Bira Bifunctional Protein, Domain 2"/>
    <property type="match status" value="1"/>
</dbReference>
<dbReference type="HAMAP" id="MF_00125">
    <property type="entry name" value="HisZ"/>
    <property type="match status" value="1"/>
</dbReference>
<dbReference type="InterPro" id="IPR045864">
    <property type="entry name" value="aa-tRNA-synth_II/BPL/LPL"/>
</dbReference>
<dbReference type="InterPro" id="IPR041715">
    <property type="entry name" value="HisRS-like_core"/>
</dbReference>
<dbReference type="InterPro" id="IPR004516">
    <property type="entry name" value="HisRS/HisZ"/>
</dbReference>
<dbReference type="InterPro" id="IPR004517">
    <property type="entry name" value="HisZ"/>
</dbReference>
<dbReference type="NCBIfam" id="TIGR00443">
    <property type="entry name" value="hisZ_biosyn_reg"/>
    <property type="match status" value="1"/>
</dbReference>
<dbReference type="NCBIfam" id="NF008935">
    <property type="entry name" value="PRK12292.1-1"/>
    <property type="match status" value="1"/>
</dbReference>
<dbReference type="NCBIfam" id="NF009086">
    <property type="entry name" value="PRK12421.1"/>
    <property type="match status" value="1"/>
</dbReference>
<dbReference type="PANTHER" id="PTHR43707:SF1">
    <property type="entry name" value="HISTIDINE--TRNA LIGASE, MITOCHONDRIAL-RELATED"/>
    <property type="match status" value="1"/>
</dbReference>
<dbReference type="PANTHER" id="PTHR43707">
    <property type="entry name" value="HISTIDYL-TRNA SYNTHETASE"/>
    <property type="match status" value="1"/>
</dbReference>
<dbReference type="Pfam" id="PF13393">
    <property type="entry name" value="tRNA-synt_His"/>
    <property type="match status" value="1"/>
</dbReference>
<dbReference type="PIRSF" id="PIRSF001549">
    <property type="entry name" value="His-tRNA_synth"/>
    <property type="match status" value="1"/>
</dbReference>
<dbReference type="SUPFAM" id="SSF55681">
    <property type="entry name" value="Class II aaRS and biotin synthetases"/>
    <property type="match status" value="1"/>
</dbReference>
<name>HISZ_LARHH</name>
<reference key="1">
    <citation type="journal article" date="2009" name="PLoS Genet.">
        <title>The complete genome and proteome of Laribacter hongkongensis reveal potential mechanisms for adaptations to different temperatures and habitats.</title>
        <authorList>
            <person name="Woo P.C.Y."/>
            <person name="Lau S.K.P."/>
            <person name="Tse H."/>
            <person name="Teng J.L.L."/>
            <person name="Curreem S.O."/>
            <person name="Tsang A.K.L."/>
            <person name="Fan R.Y.Y."/>
            <person name="Wong G.K.M."/>
            <person name="Huang Y."/>
            <person name="Loman N.J."/>
            <person name="Snyder L.A.S."/>
            <person name="Cai J.J."/>
            <person name="Huang J.-D."/>
            <person name="Mak W."/>
            <person name="Pallen M.J."/>
            <person name="Lok S."/>
            <person name="Yuen K.-Y."/>
        </authorList>
    </citation>
    <scope>NUCLEOTIDE SEQUENCE [LARGE SCALE GENOMIC DNA]</scope>
    <source>
        <strain>HLHK9</strain>
    </source>
</reference>
<sequence>MHNWLLPEHIADILPATARQLESAKAAMLERFRRYGYELVSPPLIEYTDSLLTNADPALDMQTFKLDDQLSGRQLGLRADMTPQVARIDAHLLAHRQGVTRLCYAGSVVHTRASGLMRSREPLQVGAELYGCYDLAADIEIIELMLSTLAGVGIDAVTLDLGHLGVYRALVREAQLDGETEQALFAALQAKDRASVEALTADVREPFCSAFRHLVDLYGPEAIGKARARLPGLPGIRAALDDLERLAQIFASRARISFDLTELRGTHYHTGLMFAAYAEGWAEELARGGRYDNVGRRFGRARPATGFSLDLRDMIRVLPQTHPSKGIRVRAADLSRLADEVARLRAAGEVVVVDYLGETAADLHCDRELVCREEGQSLEAAPAHP</sequence>